<feature type="chain" id="PRO_0000353691" description="NAD(P)H-quinone oxidoreductase subunit L">
    <location>
        <begin position="1"/>
        <end position="73"/>
    </location>
</feature>
<feature type="transmembrane region" description="Helical" evidence="1">
    <location>
        <begin position="7"/>
        <end position="27"/>
    </location>
</feature>
<feature type="transmembrane region" description="Helical" evidence="1">
    <location>
        <begin position="44"/>
        <end position="64"/>
    </location>
</feature>
<reference key="1">
    <citation type="journal article" date="2007" name="ISME J.">
        <title>Population level functional diversity in a microbial community revealed by comparative genomic and metagenomic analyses.</title>
        <authorList>
            <person name="Bhaya D."/>
            <person name="Grossman A.R."/>
            <person name="Steunou A.-S."/>
            <person name="Khuri N."/>
            <person name="Cohan F.M."/>
            <person name="Hamamura N."/>
            <person name="Melendrez M.C."/>
            <person name="Bateson M.M."/>
            <person name="Ward D.M."/>
            <person name="Heidelberg J.F."/>
        </authorList>
    </citation>
    <scope>NUCLEOTIDE SEQUENCE [LARGE SCALE GENOMIC DNA]</scope>
    <source>
        <strain>JA-3-3Ab</strain>
    </source>
</reference>
<dbReference type="EC" id="7.1.1.-" evidence="1"/>
<dbReference type="EMBL" id="CP000239">
    <property type="protein sequence ID" value="ABD00697.1"/>
    <property type="molecule type" value="Genomic_DNA"/>
</dbReference>
<dbReference type="RefSeq" id="WP_011431370.1">
    <property type="nucleotide sequence ID" value="NC_007775.1"/>
</dbReference>
<dbReference type="SMR" id="Q2JRP9"/>
<dbReference type="STRING" id="321327.CYA_2578"/>
<dbReference type="KEGG" id="cya:CYA_2578"/>
<dbReference type="HOGENOM" id="CLU_171077_0_0_3"/>
<dbReference type="Proteomes" id="UP000008818">
    <property type="component" value="Chromosome"/>
</dbReference>
<dbReference type="GO" id="GO:0031676">
    <property type="term" value="C:plasma membrane-derived thylakoid membrane"/>
    <property type="evidence" value="ECO:0007669"/>
    <property type="project" value="UniProtKB-SubCell"/>
</dbReference>
<dbReference type="GO" id="GO:0016655">
    <property type="term" value="F:oxidoreductase activity, acting on NAD(P)H, quinone or similar compound as acceptor"/>
    <property type="evidence" value="ECO:0007669"/>
    <property type="project" value="UniProtKB-UniRule"/>
</dbReference>
<dbReference type="GO" id="GO:0048038">
    <property type="term" value="F:quinone binding"/>
    <property type="evidence" value="ECO:0007669"/>
    <property type="project" value="UniProtKB-KW"/>
</dbReference>
<dbReference type="HAMAP" id="MF_01355">
    <property type="entry name" value="NDH1_NDH1L"/>
    <property type="match status" value="1"/>
</dbReference>
<dbReference type="InterPro" id="IPR019654">
    <property type="entry name" value="NADH-quinone_OxRdatse_su_L"/>
</dbReference>
<dbReference type="Pfam" id="PF10716">
    <property type="entry name" value="NdhL"/>
    <property type="match status" value="1"/>
</dbReference>
<evidence type="ECO:0000255" key="1">
    <source>
        <dbReference type="HAMAP-Rule" id="MF_01355"/>
    </source>
</evidence>
<sequence>MLSTSTLIGLTYAALAVLYLLVLPFLFLVYVDKRWNYSGAWEKVLMFFLVLFFFPGMVLVAPFMTFRPKPRSL</sequence>
<gene>
    <name evidence="1" type="primary">ndhL</name>
    <name type="ordered locus">CYA_2578</name>
</gene>
<name>NDHL_SYNJA</name>
<protein>
    <recommendedName>
        <fullName evidence="1">NAD(P)H-quinone oxidoreductase subunit L</fullName>
        <ecNumber evidence="1">7.1.1.-</ecNumber>
    </recommendedName>
    <alternativeName>
        <fullName evidence="1">NAD(P)H dehydrogenase I subunit L</fullName>
    </alternativeName>
    <alternativeName>
        <fullName>NDH-1 subunit L</fullName>
    </alternativeName>
    <alternativeName>
        <fullName>NDH-L</fullName>
    </alternativeName>
</protein>
<keyword id="KW-0472">Membrane</keyword>
<keyword id="KW-0520">NAD</keyword>
<keyword id="KW-0521">NADP</keyword>
<keyword id="KW-0618">Plastoquinone</keyword>
<keyword id="KW-0874">Quinone</keyword>
<keyword id="KW-0793">Thylakoid</keyword>
<keyword id="KW-1278">Translocase</keyword>
<keyword id="KW-0812">Transmembrane</keyword>
<keyword id="KW-1133">Transmembrane helix</keyword>
<keyword id="KW-0813">Transport</keyword>
<proteinExistence type="inferred from homology"/>
<comment type="function">
    <text evidence="1">NDH-1 shuttles electrons from an unknown electron donor, via FMN and iron-sulfur (Fe-S) centers, to quinones in the respiratory and/or the photosynthetic chain. The immediate electron acceptor for the enzyme in this species is believed to be plastoquinone. Couples the redox reaction to proton translocation, and thus conserves the redox energy in a proton gradient. Cyanobacterial NDH-1 also plays a role in inorganic carbon-concentration.</text>
</comment>
<comment type="catalytic activity">
    <reaction evidence="1">
        <text>a plastoquinone + NADH + (n+1) H(+)(in) = a plastoquinol + NAD(+) + n H(+)(out)</text>
        <dbReference type="Rhea" id="RHEA:42608"/>
        <dbReference type="Rhea" id="RHEA-COMP:9561"/>
        <dbReference type="Rhea" id="RHEA-COMP:9562"/>
        <dbReference type="ChEBI" id="CHEBI:15378"/>
        <dbReference type="ChEBI" id="CHEBI:17757"/>
        <dbReference type="ChEBI" id="CHEBI:57540"/>
        <dbReference type="ChEBI" id="CHEBI:57945"/>
        <dbReference type="ChEBI" id="CHEBI:62192"/>
    </reaction>
</comment>
<comment type="catalytic activity">
    <reaction evidence="1">
        <text>a plastoquinone + NADPH + (n+1) H(+)(in) = a plastoquinol + NADP(+) + n H(+)(out)</text>
        <dbReference type="Rhea" id="RHEA:42612"/>
        <dbReference type="Rhea" id="RHEA-COMP:9561"/>
        <dbReference type="Rhea" id="RHEA-COMP:9562"/>
        <dbReference type="ChEBI" id="CHEBI:15378"/>
        <dbReference type="ChEBI" id="CHEBI:17757"/>
        <dbReference type="ChEBI" id="CHEBI:57783"/>
        <dbReference type="ChEBI" id="CHEBI:58349"/>
        <dbReference type="ChEBI" id="CHEBI:62192"/>
    </reaction>
</comment>
<comment type="subunit">
    <text evidence="1">NDH-1 can be composed of about 15 different subunits; different subcomplexes with different compositions have been identified which probably have different functions.</text>
</comment>
<comment type="subcellular location">
    <subcellularLocation>
        <location evidence="1">Cellular thylakoid membrane</location>
        <topology evidence="1">Multi-pass membrane protein</topology>
    </subcellularLocation>
</comment>
<comment type="similarity">
    <text evidence="1">Belongs to the complex I NdhL subunit family.</text>
</comment>
<organism>
    <name type="scientific">Synechococcus sp. (strain JA-3-3Ab)</name>
    <name type="common">Cyanobacteria bacterium Yellowstone A-Prime</name>
    <dbReference type="NCBI Taxonomy" id="321327"/>
    <lineage>
        <taxon>Bacteria</taxon>
        <taxon>Bacillati</taxon>
        <taxon>Cyanobacteriota</taxon>
        <taxon>Cyanophyceae</taxon>
        <taxon>Synechococcales</taxon>
        <taxon>Synechococcaceae</taxon>
        <taxon>Synechococcus</taxon>
    </lineage>
</organism>
<accession>Q2JRP9</accession>